<proteinExistence type="evidence at protein level"/>
<accession>D3Z1D3</accession>
<organism>
    <name type="scientific">Mus musculus</name>
    <name type="common">Mouse</name>
    <dbReference type="NCBI Taxonomy" id="10090"/>
    <lineage>
        <taxon>Eukaryota</taxon>
        <taxon>Metazoa</taxon>
        <taxon>Chordata</taxon>
        <taxon>Craniata</taxon>
        <taxon>Vertebrata</taxon>
        <taxon>Euteleostomi</taxon>
        <taxon>Mammalia</taxon>
        <taxon>Eutheria</taxon>
        <taxon>Euarchontoglires</taxon>
        <taxon>Glires</taxon>
        <taxon>Rodentia</taxon>
        <taxon>Myomorpha</taxon>
        <taxon>Muroidea</taxon>
        <taxon>Muridae</taxon>
        <taxon>Murinae</taxon>
        <taxon>Mus</taxon>
        <taxon>Mus</taxon>
    </lineage>
</organism>
<reference key="1">
    <citation type="journal article" date="2009" name="PLoS Biol.">
        <title>Lineage-specific biology revealed by a finished genome assembly of the mouse.</title>
        <authorList>
            <person name="Church D.M."/>
            <person name="Goodstadt L."/>
            <person name="Hillier L.W."/>
            <person name="Zody M.C."/>
            <person name="Goldstein S."/>
            <person name="She X."/>
            <person name="Bult C.J."/>
            <person name="Agarwala R."/>
            <person name="Cherry J.L."/>
            <person name="DiCuccio M."/>
            <person name="Hlavina W."/>
            <person name="Kapustin Y."/>
            <person name="Meric P."/>
            <person name="Maglott D."/>
            <person name="Birtle Z."/>
            <person name="Marques A.C."/>
            <person name="Graves T."/>
            <person name="Zhou S."/>
            <person name="Teague B."/>
            <person name="Potamousis K."/>
            <person name="Churas C."/>
            <person name="Place M."/>
            <person name="Herschleb J."/>
            <person name="Runnheim R."/>
            <person name="Forrest D."/>
            <person name="Amos-Landgraf J."/>
            <person name="Schwartz D.C."/>
            <person name="Cheng Z."/>
            <person name="Lindblad-Toh K."/>
            <person name="Eichler E.E."/>
            <person name="Ponting C.P."/>
        </authorList>
    </citation>
    <scope>NUCLEOTIDE SEQUENCE [LARGE SCALE GENOMIC DNA]</scope>
    <source>
        <strain>C57BL/6J</strain>
    </source>
</reference>
<reference key="2">
    <citation type="journal article" date="2010" name="Cell">
        <title>A tissue-specific atlas of mouse protein phosphorylation and expression.</title>
        <authorList>
            <person name="Huttlin E.L."/>
            <person name="Jedrychowski M.P."/>
            <person name="Elias J.E."/>
            <person name="Goswami T."/>
            <person name="Rad R."/>
            <person name="Beausoleil S.A."/>
            <person name="Villen J."/>
            <person name="Haas W."/>
            <person name="Sowa M.E."/>
            <person name="Gygi S.P."/>
        </authorList>
    </citation>
    <scope>IDENTIFICATION BY MASS SPECTROMETRY [LARGE SCALE ANALYSIS]</scope>
</reference>
<reference key="3">
    <citation type="journal article" date="2017" name="J. Biol. Chem.">
        <title>The novel cardiac z-disc protein CEFIP regulates cardiomyocyte hypertrophy by modulating calcineurin signaling.</title>
        <authorList>
            <person name="Dierck F."/>
            <person name="Kuhn C."/>
            <person name="Rohr C."/>
            <person name="Hille S."/>
            <person name="Braune J."/>
            <person name="Sossalla S."/>
            <person name="Molt S."/>
            <person name="van der Ven P.F.M."/>
            <person name="Fuerst D.O."/>
            <person name="Frey N."/>
        </authorList>
    </citation>
    <scope>FUNCTION</scope>
    <scope>SUBCELLULAR LOCATION</scope>
    <scope>TISSUE SPECIFICITY</scope>
</reference>
<keyword id="KW-0963">Cytoplasm</keyword>
<keyword id="KW-0597">Phosphoprotein</keyword>
<keyword id="KW-1185">Reference proteome</keyword>
<evidence type="ECO:0000250" key="1">
    <source>
        <dbReference type="UniProtKB" id="Q711Q0"/>
    </source>
</evidence>
<evidence type="ECO:0000256" key="2">
    <source>
        <dbReference type="SAM" id="MobiDB-lite"/>
    </source>
</evidence>
<evidence type="ECO:0000269" key="3">
    <source>
    </source>
</evidence>
<evidence type="ECO:0000303" key="4">
    <source>
    </source>
</evidence>
<gene>
    <name evidence="4" type="primary">CEFIP</name>
</gene>
<protein>
    <recommendedName>
        <fullName evidence="4">Cardiac-enriched FHL2-interacting protein</fullName>
    </recommendedName>
</protein>
<sequence length="1412" mass="154478">MMQGNKKCTDGFSDTSSIGSVLDEADREVSNLTDRAFRSLCISEDTSFHDSDLALSPDVTSQVSGTFHQETVGHANRKSGIWSQLPSQGTEHSGWAATFQQQPKYVQGEEKYPKTSPLPTPVQRRLEVPISGLRSSSKPISKVSSLIRSFDRTETQSCDSRPPPSKPPALKNPPKFAHPPESGVNFCFDSAFLTVRRVPAEVSNTHQGSHQSGRAPGEQESPKNPEIASHSSDSLLRTPDHVAGSFEPRYPSPPLKPATAEPGRGKEWIPRRTFLHSENSAFESWDTHQPKLRERKDIAETTPESKAPKHYEDMPLLKEPYPAESKGSPYQARANCAQEENRSPSGSQSTSGAWGARDPGSQLFPVEGNASQIDPQVKRSKAPWRKPKTGKGGTDGPPDALEDKKQPNRRGLPLYSKLNPQGQLPENGVLDMPEESNDHYNPPFNISKLLTPIISTKHVLETSDTQPVEISPSPPGQLNGYQEKESSEAQSRDSYKSKAPSLLFNLKDVRKRVKSTYSPLPLLKGFDEKTRGKLDSKQEPLSNGVTLPDGLEENPPTELLPDNVPGVLHSSTQKDPAINSRESFAVSHPTFSSPSASSQTHFCVNGEAAESNSNEKEEANGESELDPSKGGGHPDCRENLPRKHLSLKLFNRESEMGPAMAEMKPHQLENGLSRSVSQETETERETGFQSLPLNQKFSPGPLSPEEEDVFYSDSQSDFTPCRQTKAKFSTSSSDQSFASFEDQQKVCFTEGPQEDRKSHVSAGDKQRDETAVEKEESQQCASRNEHRGVDEQRQEEIQRKAQGVSGGRPRKASAEDLSARGSWMGADKDTAHTHAKDPTPLPASTNKHRLFPIKDNTLRATPVIKPIILPLLRTVSSEDSLSSGHQENELPKQLWGEDAGGLSASESQEMPNTPLSNNDVPGTQHRCMVCEDVQEDPVHTAAQDETSQQTRKGSFSFLPPVEEENRMKPSPDTAGEGLAQEKSKSADLGKLGVPQRIPTIALLPDDLEDSPPSLPQHTYWEEQGFKGHFLSAPRAGPSGRRLVPSEAETSPNPSSLGESSTCSPAASSIWEEASQAAGEHWQRQEPPGPNPWASPGPTGLTRREDMTHGLTWEAEGSDPSDFRALSPRGILLADAAEKPEPPALLEKAAGKPPAVPPKTEKALRRAKKLASKRRKSDQLLEKHTEAWEGKSFTEDTQGTERRPVSPGKGPRPRFPAIRSLPPPTHRHSVSCGWEPTGRRPWGPQSLTPLPPYPATQKVLQDPQSGQYFVFDVPLQVKIKTFYDPETGKYVKVSVPSSEEASSEPPLQDALAAPYLLYPGFRPVPVTSVMPLRCSSQLAAPTFLRQGSGHRPQSSQGSRLQPPPERLGESTQHASGQCPRGPSHSPEKESAEAPRLSIISTDDLEDFATEGVS</sequence>
<name>CEFIP_MOUSE</name>
<comment type="function">
    <text evidence="3">Plays an important role in cardiomyocyte hypertrophy via activation of the calcineurin/NFAT signaling pathway.</text>
</comment>
<comment type="subunit">
    <text evidence="1">Interacts with FHL2.</text>
</comment>
<comment type="subcellular location">
    <subcellularLocation>
        <location evidence="3">Cytoplasm</location>
        <location evidence="3">Myofibril</location>
        <location evidence="3">Sarcomere</location>
        <location evidence="3">Z line</location>
    </subcellularLocation>
</comment>
<comment type="tissue specificity">
    <text evidence="3">Expressed in the heart and skeletal muscle (at protein level).</text>
</comment>
<feature type="chain" id="PRO_0000444578" description="Cardiac-enriched FHL2-interacting protein">
    <location>
        <begin position="1"/>
        <end position="1412"/>
    </location>
</feature>
<feature type="region of interest" description="Disordered" evidence="2">
    <location>
        <begin position="106"/>
        <end position="177"/>
    </location>
</feature>
<feature type="region of interest" description="Disordered" evidence="2">
    <location>
        <begin position="202"/>
        <end position="443"/>
    </location>
</feature>
<feature type="region of interest" description="Disordered" evidence="2">
    <location>
        <begin position="460"/>
        <end position="500"/>
    </location>
</feature>
<feature type="region of interest" description="Disordered" evidence="2">
    <location>
        <begin position="517"/>
        <end position="848"/>
    </location>
</feature>
<feature type="region of interest" description="Disordered" evidence="2">
    <location>
        <begin position="877"/>
        <end position="923"/>
    </location>
</feature>
<feature type="region of interest" description="Disordered" evidence="2">
    <location>
        <begin position="935"/>
        <end position="1255"/>
    </location>
</feature>
<feature type="region of interest" description="Disordered" evidence="2">
    <location>
        <begin position="1344"/>
        <end position="1412"/>
    </location>
</feature>
<feature type="compositionally biased region" description="Low complexity" evidence="2">
    <location>
        <begin position="135"/>
        <end position="145"/>
    </location>
</feature>
<feature type="compositionally biased region" description="Pro residues" evidence="2">
    <location>
        <begin position="161"/>
        <end position="171"/>
    </location>
</feature>
<feature type="compositionally biased region" description="Polar residues" evidence="2">
    <location>
        <begin position="202"/>
        <end position="212"/>
    </location>
</feature>
<feature type="compositionally biased region" description="Basic and acidic residues" evidence="2">
    <location>
        <begin position="285"/>
        <end position="299"/>
    </location>
</feature>
<feature type="compositionally biased region" description="Basic and acidic residues" evidence="2">
    <location>
        <begin position="306"/>
        <end position="316"/>
    </location>
</feature>
<feature type="compositionally biased region" description="Polar residues" evidence="2">
    <location>
        <begin position="343"/>
        <end position="352"/>
    </location>
</feature>
<feature type="compositionally biased region" description="Basic residues" evidence="2">
    <location>
        <begin position="378"/>
        <end position="389"/>
    </location>
</feature>
<feature type="compositionally biased region" description="Basic and acidic residues" evidence="2">
    <location>
        <begin position="482"/>
        <end position="496"/>
    </location>
</feature>
<feature type="compositionally biased region" description="Basic and acidic residues" evidence="2">
    <location>
        <begin position="525"/>
        <end position="538"/>
    </location>
</feature>
<feature type="compositionally biased region" description="Low complexity" evidence="2">
    <location>
        <begin position="587"/>
        <end position="612"/>
    </location>
</feature>
<feature type="compositionally biased region" description="Basic and acidic residues" evidence="2">
    <location>
        <begin position="632"/>
        <end position="641"/>
    </location>
</feature>
<feature type="compositionally biased region" description="Polar residues" evidence="2">
    <location>
        <begin position="670"/>
        <end position="679"/>
    </location>
</feature>
<feature type="compositionally biased region" description="Polar residues" evidence="2">
    <location>
        <begin position="687"/>
        <end position="697"/>
    </location>
</feature>
<feature type="compositionally biased region" description="Polar residues" evidence="2">
    <location>
        <begin position="712"/>
        <end position="722"/>
    </location>
</feature>
<feature type="compositionally biased region" description="Low complexity" evidence="2">
    <location>
        <begin position="728"/>
        <end position="741"/>
    </location>
</feature>
<feature type="compositionally biased region" description="Basic and acidic residues" evidence="2">
    <location>
        <begin position="753"/>
        <end position="799"/>
    </location>
</feature>
<feature type="compositionally biased region" description="Basic and acidic residues" evidence="2">
    <location>
        <begin position="826"/>
        <end position="837"/>
    </location>
</feature>
<feature type="compositionally biased region" description="Polar residues" evidence="2">
    <location>
        <begin position="904"/>
        <end position="921"/>
    </location>
</feature>
<feature type="compositionally biased region" description="Polar residues" evidence="2">
    <location>
        <begin position="943"/>
        <end position="953"/>
    </location>
</feature>
<feature type="compositionally biased region" description="Polar residues" evidence="2">
    <location>
        <begin position="1047"/>
        <end position="1066"/>
    </location>
</feature>
<feature type="compositionally biased region" description="Basic residues" evidence="2">
    <location>
        <begin position="1164"/>
        <end position="1175"/>
    </location>
</feature>
<feature type="compositionally biased region" description="Basic and acidic residues" evidence="2">
    <location>
        <begin position="1176"/>
        <end position="1203"/>
    </location>
</feature>
<feature type="compositionally biased region" description="Acidic residues" evidence="2">
    <location>
        <begin position="1401"/>
        <end position="1412"/>
    </location>
</feature>
<feature type="modified residue" description="Phosphothreonine" evidence="1">
    <location>
        <position position="120"/>
    </location>
</feature>
<feature type="modified residue" description="Phosphoserine" evidence="1">
    <location>
        <position position="328"/>
    </location>
</feature>
<feature type="modified residue" description="Phosphoserine" evidence="1">
    <location>
        <position position="473"/>
    </location>
</feature>
<feature type="modified residue" description="Phosphoserine" evidence="1">
    <location>
        <position position="813"/>
    </location>
</feature>
<dbReference type="EMBL" id="CT009541">
    <property type="status" value="NOT_ANNOTATED_CDS"/>
    <property type="molecule type" value="Genomic_DNA"/>
</dbReference>
<dbReference type="CCDS" id="CCDS49437.1"/>
<dbReference type="RefSeq" id="NP_001182026.1">
    <property type="nucleotide sequence ID" value="NM_001195097.1"/>
</dbReference>
<dbReference type="RefSeq" id="XP_006518377.1">
    <property type="nucleotide sequence ID" value="XM_006518314.3"/>
</dbReference>
<dbReference type="RefSeq" id="XP_006518378.1">
    <property type="nucleotide sequence ID" value="XM_006518315.3"/>
</dbReference>
<dbReference type="RefSeq" id="XP_006518379.1">
    <property type="nucleotide sequence ID" value="XM_006518316.3"/>
</dbReference>
<dbReference type="RefSeq" id="XP_006518380.1">
    <property type="nucleotide sequence ID" value="XM_006518317.3"/>
</dbReference>
<dbReference type="RefSeq" id="XP_006518381.1">
    <property type="nucleotide sequence ID" value="XM_006518318.3"/>
</dbReference>
<dbReference type="RefSeq" id="XP_006518382.1">
    <property type="nucleotide sequence ID" value="XM_006518319.3"/>
</dbReference>
<dbReference type="FunCoup" id="D3Z1D3">
    <property type="interactions" value="18"/>
</dbReference>
<dbReference type="STRING" id="10090.ENSMUSP00000093741"/>
<dbReference type="GlyGen" id="D3Z1D3">
    <property type="glycosylation" value="1 site"/>
</dbReference>
<dbReference type="iPTMnet" id="D3Z1D3"/>
<dbReference type="PhosphoSitePlus" id="D3Z1D3"/>
<dbReference type="SwissPalm" id="D3Z1D3"/>
<dbReference type="PaxDb" id="10090-ENSMUSP00000093741"/>
<dbReference type="ProteomicsDB" id="307835"/>
<dbReference type="Antibodypedia" id="50031">
    <property type="antibodies" value="25 antibodies from 9 providers"/>
</dbReference>
<dbReference type="Ensembl" id="ENSMUST00000096038.4">
    <property type="protein sequence ID" value="ENSMUSP00000093741.4"/>
    <property type="gene ID" value="ENSMUSG00000071540.5"/>
</dbReference>
<dbReference type="GeneID" id="100504518"/>
<dbReference type="KEGG" id="mmu:100504518"/>
<dbReference type="UCSC" id="uc007szg.2">
    <property type="organism name" value="mouse"/>
</dbReference>
<dbReference type="AGR" id="MGI:3588196"/>
<dbReference type="MGI" id="MGI:3588196">
    <property type="gene designation" value="3425401B19Rik"/>
</dbReference>
<dbReference type="VEuPathDB" id="HostDB:ENSMUSG00000071540"/>
<dbReference type="eggNOG" id="ENOG502QVE3">
    <property type="taxonomic scope" value="Eukaryota"/>
</dbReference>
<dbReference type="GeneTree" id="ENSGT00730000111333"/>
<dbReference type="HOGENOM" id="CLU_255771_0_0_1"/>
<dbReference type="InParanoid" id="D3Z1D3"/>
<dbReference type="OMA" id="HYSPPFN"/>
<dbReference type="OrthoDB" id="8945866at2759"/>
<dbReference type="PhylomeDB" id="D3Z1D3"/>
<dbReference type="TreeFam" id="TF336978"/>
<dbReference type="BioGRID-ORCS" id="100504518">
    <property type="hits" value="1 hit in 76 CRISPR screens"/>
</dbReference>
<dbReference type="PRO" id="PR:D3Z1D3"/>
<dbReference type="Proteomes" id="UP000000589">
    <property type="component" value="Chromosome 14"/>
</dbReference>
<dbReference type="RNAct" id="D3Z1D3">
    <property type="molecule type" value="protein"/>
</dbReference>
<dbReference type="Bgee" id="ENSMUSG00000071540">
    <property type="expression patterns" value="Expressed in interventricular septum and 20 other cell types or tissues"/>
</dbReference>
<dbReference type="GO" id="GO:0030018">
    <property type="term" value="C:Z disc"/>
    <property type="evidence" value="ECO:0000314"/>
    <property type="project" value="UniProtKB"/>
</dbReference>
<dbReference type="GO" id="GO:0086003">
    <property type="term" value="P:cardiac muscle cell contraction"/>
    <property type="evidence" value="ECO:0000315"/>
    <property type="project" value="MGI"/>
</dbReference>
<dbReference type="GO" id="GO:0055007">
    <property type="term" value="P:cardiac muscle cell differentiation"/>
    <property type="evidence" value="ECO:0000315"/>
    <property type="project" value="MGI"/>
</dbReference>
<dbReference type="GO" id="GO:0007507">
    <property type="term" value="P:heart development"/>
    <property type="evidence" value="ECO:0000315"/>
    <property type="project" value="MGI"/>
</dbReference>
<dbReference type="GO" id="GO:0003007">
    <property type="term" value="P:heart morphogenesis"/>
    <property type="evidence" value="ECO:0000315"/>
    <property type="project" value="MGI"/>
</dbReference>
<dbReference type="GO" id="GO:0070886">
    <property type="term" value="P:positive regulation of calcineurin-NFAT signaling cascade"/>
    <property type="evidence" value="ECO:0000315"/>
    <property type="project" value="UniProtKB"/>
</dbReference>
<dbReference type="InterPro" id="IPR052303">
    <property type="entry name" value="CEFIP"/>
</dbReference>
<dbReference type="InterPro" id="IPR027838">
    <property type="entry name" value="DUF4585"/>
</dbReference>
<dbReference type="PANTHER" id="PTHR33775:SF2">
    <property type="entry name" value="CARDIAC-ENRICHED FHL2-INTERACTING PROTEIN"/>
    <property type="match status" value="1"/>
</dbReference>
<dbReference type="PANTHER" id="PTHR33775">
    <property type="entry name" value="CARDIAC-ENRICHED FHL2-INTERACTING PROTEIN-RELATED"/>
    <property type="match status" value="1"/>
</dbReference>
<dbReference type="Pfam" id="PF15232">
    <property type="entry name" value="DUF4585"/>
    <property type="match status" value="1"/>
</dbReference>